<comment type="function">
    <text evidence="1">This protein binds to the 23S rRNA, and is important in its secondary structure. It is located near the subunit interface in the base of the L7/L12 stalk, and near the tRNA binding site of the peptidyltransferase center.</text>
</comment>
<comment type="subunit">
    <text evidence="1">Part of the 50S ribosomal subunit.</text>
</comment>
<comment type="similarity">
    <text evidence="1">Belongs to the universal ribosomal protein uL6 family.</text>
</comment>
<dbReference type="EMBL" id="CP000010">
    <property type="protein sequence ID" value="AAU47855.1"/>
    <property type="molecule type" value="Genomic_DNA"/>
</dbReference>
<dbReference type="RefSeq" id="WP_004197947.1">
    <property type="nucleotide sequence ID" value="NC_006348.1"/>
</dbReference>
<dbReference type="RefSeq" id="YP_104151.1">
    <property type="nucleotide sequence ID" value="NC_006348.1"/>
</dbReference>
<dbReference type="SMR" id="Q62GM0"/>
<dbReference type="GeneID" id="93061817"/>
<dbReference type="KEGG" id="bma:BMA2617"/>
<dbReference type="PATRIC" id="fig|243160.12.peg.2688"/>
<dbReference type="eggNOG" id="COG0097">
    <property type="taxonomic scope" value="Bacteria"/>
</dbReference>
<dbReference type="HOGENOM" id="CLU_065464_1_2_4"/>
<dbReference type="Proteomes" id="UP000006693">
    <property type="component" value="Chromosome 1"/>
</dbReference>
<dbReference type="GO" id="GO:0022625">
    <property type="term" value="C:cytosolic large ribosomal subunit"/>
    <property type="evidence" value="ECO:0007669"/>
    <property type="project" value="TreeGrafter"/>
</dbReference>
<dbReference type="GO" id="GO:0019843">
    <property type="term" value="F:rRNA binding"/>
    <property type="evidence" value="ECO:0007669"/>
    <property type="project" value="UniProtKB-UniRule"/>
</dbReference>
<dbReference type="GO" id="GO:0003735">
    <property type="term" value="F:structural constituent of ribosome"/>
    <property type="evidence" value="ECO:0007669"/>
    <property type="project" value="InterPro"/>
</dbReference>
<dbReference type="GO" id="GO:0002181">
    <property type="term" value="P:cytoplasmic translation"/>
    <property type="evidence" value="ECO:0007669"/>
    <property type="project" value="TreeGrafter"/>
</dbReference>
<dbReference type="FunFam" id="3.90.930.12:FF:000001">
    <property type="entry name" value="50S ribosomal protein L6"/>
    <property type="match status" value="1"/>
</dbReference>
<dbReference type="Gene3D" id="3.90.930.12">
    <property type="entry name" value="Ribosomal protein L6, alpha-beta domain"/>
    <property type="match status" value="2"/>
</dbReference>
<dbReference type="HAMAP" id="MF_01365_B">
    <property type="entry name" value="Ribosomal_uL6_B"/>
    <property type="match status" value="1"/>
</dbReference>
<dbReference type="InterPro" id="IPR000702">
    <property type="entry name" value="Ribosomal_uL6-like"/>
</dbReference>
<dbReference type="InterPro" id="IPR036789">
    <property type="entry name" value="Ribosomal_uL6-like_a/b-dom_sf"/>
</dbReference>
<dbReference type="InterPro" id="IPR020040">
    <property type="entry name" value="Ribosomal_uL6_a/b-dom"/>
</dbReference>
<dbReference type="InterPro" id="IPR019906">
    <property type="entry name" value="Ribosomal_uL6_bac-type"/>
</dbReference>
<dbReference type="InterPro" id="IPR002358">
    <property type="entry name" value="Ribosomal_uL6_CS"/>
</dbReference>
<dbReference type="NCBIfam" id="TIGR03654">
    <property type="entry name" value="L6_bact"/>
    <property type="match status" value="1"/>
</dbReference>
<dbReference type="PANTHER" id="PTHR11655">
    <property type="entry name" value="60S/50S RIBOSOMAL PROTEIN L6/L9"/>
    <property type="match status" value="1"/>
</dbReference>
<dbReference type="PANTHER" id="PTHR11655:SF14">
    <property type="entry name" value="LARGE RIBOSOMAL SUBUNIT PROTEIN UL6M"/>
    <property type="match status" value="1"/>
</dbReference>
<dbReference type="Pfam" id="PF00347">
    <property type="entry name" value="Ribosomal_L6"/>
    <property type="match status" value="2"/>
</dbReference>
<dbReference type="PIRSF" id="PIRSF002162">
    <property type="entry name" value="Ribosomal_L6"/>
    <property type="match status" value="1"/>
</dbReference>
<dbReference type="PRINTS" id="PR00059">
    <property type="entry name" value="RIBOSOMALL6"/>
</dbReference>
<dbReference type="SUPFAM" id="SSF56053">
    <property type="entry name" value="Ribosomal protein L6"/>
    <property type="match status" value="2"/>
</dbReference>
<dbReference type="PROSITE" id="PS00525">
    <property type="entry name" value="RIBOSOMAL_L6_1"/>
    <property type="match status" value="1"/>
</dbReference>
<evidence type="ECO:0000255" key="1">
    <source>
        <dbReference type="HAMAP-Rule" id="MF_01365"/>
    </source>
</evidence>
<evidence type="ECO:0000305" key="2"/>
<organism>
    <name type="scientific">Burkholderia mallei (strain ATCC 23344)</name>
    <dbReference type="NCBI Taxonomy" id="243160"/>
    <lineage>
        <taxon>Bacteria</taxon>
        <taxon>Pseudomonadati</taxon>
        <taxon>Pseudomonadota</taxon>
        <taxon>Betaproteobacteria</taxon>
        <taxon>Burkholderiales</taxon>
        <taxon>Burkholderiaceae</taxon>
        <taxon>Burkholderia</taxon>
        <taxon>pseudomallei group</taxon>
    </lineage>
</organism>
<keyword id="KW-1185">Reference proteome</keyword>
<keyword id="KW-0687">Ribonucleoprotein</keyword>
<keyword id="KW-0689">Ribosomal protein</keyword>
<keyword id="KW-0694">RNA-binding</keyword>
<keyword id="KW-0699">rRNA-binding</keyword>
<feature type="chain" id="PRO_0000265231" description="Large ribosomal subunit protein uL6">
    <location>
        <begin position="1"/>
        <end position="176"/>
    </location>
</feature>
<protein>
    <recommendedName>
        <fullName evidence="1">Large ribosomal subunit protein uL6</fullName>
    </recommendedName>
    <alternativeName>
        <fullName evidence="2">50S ribosomal protein L6</fullName>
    </alternativeName>
</protein>
<proteinExistence type="inferred from homology"/>
<name>RL6_BURMA</name>
<reference key="1">
    <citation type="journal article" date="2004" name="Proc. Natl. Acad. Sci. U.S.A.">
        <title>Structural flexibility in the Burkholderia mallei genome.</title>
        <authorList>
            <person name="Nierman W.C."/>
            <person name="DeShazer D."/>
            <person name="Kim H.S."/>
            <person name="Tettelin H."/>
            <person name="Nelson K.E."/>
            <person name="Feldblyum T.V."/>
            <person name="Ulrich R.L."/>
            <person name="Ronning C.M."/>
            <person name="Brinkac L.M."/>
            <person name="Daugherty S.C."/>
            <person name="Davidsen T.D."/>
            <person name="DeBoy R.T."/>
            <person name="Dimitrov G."/>
            <person name="Dodson R.J."/>
            <person name="Durkin A.S."/>
            <person name="Gwinn M.L."/>
            <person name="Haft D.H."/>
            <person name="Khouri H.M."/>
            <person name="Kolonay J.F."/>
            <person name="Madupu R."/>
            <person name="Mohammoud Y."/>
            <person name="Nelson W.C."/>
            <person name="Radune D."/>
            <person name="Romero C.M."/>
            <person name="Sarria S."/>
            <person name="Selengut J."/>
            <person name="Shamblin C."/>
            <person name="Sullivan S.A."/>
            <person name="White O."/>
            <person name="Yu Y."/>
            <person name="Zafar N."/>
            <person name="Zhou L."/>
            <person name="Fraser C.M."/>
        </authorList>
    </citation>
    <scope>NUCLEOTIDE SEQUENCE [LARGE SCALE GENOMIC DNA]</scope>
    <source>
        <strain>ATCC 23344</strain>
    </source>
</reference>
<gene>
    <name evidence="1" type="primary">rplF</name>
    <name type="ordered locus">BMA2617</name>
</gene>
<accession>Q62GM0</accession>
<sequence>MSRVGKSPIALQGAEVKLADGAITVKGPLGTITQAVNPLVNVANNDGTLNLSPVDDSREANALSGTMRAIIANAVHGVTKGFERKLTLVGVGYRAQAQGDKLNLSLGFSHPVVHQMPEGIKAETPTQTEIVIKGIDKQKVGQVAAEVRGYRPPEPYKGKGVRYADEVVILKETKKK</sequence>